<proteinExistence type="inferred from homology"/>
<name>PUR9_GEODF</name>
<gene>
    <name evidence="1" type="primary">purH</name>
    <name type="ordered locus">Geob_1422</name>
</gene>
<protein>
    <recommendedName>
        <fullName evidence="1">Bifunctional purine biosynthesis protein PurH</fullName>
    </recommendedName>
    <domain>
        <recommendedName>
            <fullName evidence="1">Phosphoribosylaminoimidazolecarboxamide formyltransferase</fullName>
            <ecNumber evidence="1">2.1.2.3</ecNumber>
        </recommendedName>
        <alternativeName>
            <fullName evidence="1">AICAR transformylase</fullName>
        </alternativeName>
    </domain>
    <domain>
        <recommendedName>
            <fullName evidence="1">IMP cyclohydrolase</fullName>
            <ecNumber evidence="1">3.5.4.10</ecNumber>
        </recommendedName>
        <alternativeName>
            <fullName evidence="1">ATIC</fullName>
        </alternativeName>
        <alternativeName>
            <fullName evidence="1">IMP synthase</fullName>
        </alternativeName>
        <alternativeName>
            <fullName evidence="1">Inosinicase</fullName>
        </alternativeName>
    </domain>
</protein>
<keyword id="KW-0378">Hydrolase</keyword>
<keyword id="KW-0511">Multifunctional enzyme</keyword>
<keyword id="KW-0658">Purine biosynthesis</keyword>
<keyword id="KW-1185">Reference proteome</keyword>
<keyword id="KW-0808">Transferase</keyword>
<organism>
    <name type="scientific">Geotalea daltonii (strain DSM 22248 / JCM 15807 / FRC-32)</name>
    <name type="common">Geobacter daltonii</name>
    <dbReference type="NCBI Taxonomy" id="316067"/>
    <lineage>
        <taxon>Bacteria</taxon>
        <taxon>Pseudomonadati</taxon>
        <taxon>Thermodesulfobacteriota</taxon>
        <taxon>Desulfuromonadia</taxon>
        <taxon>Geobacterales</taxon>
        <taxon>Geobacteraceae</taxon>
        <taxon>Geotalea</taxon>
    </lineage>
</organism>
<feature type="chain" id="PRO_1000122961" description="Bifunctional purine biosynthesis protein PurH">
    <location>
        <begin position="1"/>
        <end position="521"/>
    </location>
</feature>
<feature type="domain" description="MGS-like" evidence="2">
    <location>
        <begin position="1"/>
        <end position="147"/>
    </location>
</feature>
<evidence type="ECO:0000255" key="1">
    <source>
        <dbReference type="HAMAP-Rule" id="MF_00139"/>
    </source>
</evidence>
<evidence type="ECO:0000255" key="2">
    <source>
        <dbReference type="PROSITE-ProRule" id="PRU01202"/>
    </source>
</evidence>
<accession>B9M4Q6</accession>
<sequence length="521" mass="55890">MAKISRALISVSDKTGIVDFSKELAGYGVEILSTGGTAKLLREAGLAVKDVSEFTGFPEMLDGRVKTLHPKVHGGLLGMRGNSEHVATMKAHGIEPIDMVVVNLYPFEATVAKPDCSLEDAIENIDIGGPTMLRSAAKNNADVTVLVDHNDYRKVLDEMKQSGGAVSSATNFGLAVKVYQHTAAYDGAISNWLGARTGEGVAEYPDTLTFQFKKAQGMRYGENPHQSAAFYVERDVKEASIATALQLQGKELSYNNIGDTDAALECIKQFNEGPACVIVKHANPCGVAIGANLLDAYDRAYKTDPESAFGGIIAFNGELDEAAAKAIVDRQFVEVIIAPKVSAKASEIVAAKKNVRLLQCGQWQAESLARLDMKRVNGGLLVQQTDLSLHGELKVVTKRQPTEKEMIDLLFTWRVAKFVKSNAIVYGKDGMTIGVGAGQMSRVNSARIAAIKAEHAGLQVAGAVMASDAFFPFRDGIDNAAQVGITAVIQPGGSMRDEEVIAAADEHGMAMVFTSMRHFRH</sequence>
<reference key="1">
    <citation type="submission" date="2009-01" db="EMBL/GenBank/DDBJ databases">
        <title>Complete sequence of Geobacter sp. FRC-32.</title>
        <authorList>
            <consortium name="US DOE Joint Genome Institute"/>
            <person name="Lucas S."/>
            <person name="Copeland A."/>
            <person name="Lapidus A."/>
            <person name="Glavina del Rio T."/>
            <person name="Dalin E."/>
            <person name="Tice H."/>
            <person name="Bruce D."/>
            <person name="Goodwin L."/>
            <person name="Pitluck S."/>
            <person name="Saunders E."/>
            <person name="Brettin T."/>
            <person name="Detter J.C."/>
            <person name="Han C."/>
            <person name="Larimer F."/>
            <person name="Land M."/>
            <person name="Hauser L."/>
            <person name="Kyrpides N."/>
            <person name="Ovchinnikova G."/>
            <person name="Kostka J."/>
            <person name="Richardson P."/>
        </authorList>
    </citation>
    <scope>NUCLEOTIDE SEQUENCE [LARGE SCALE GENOMIC DNA]</scope>
    <source>
        <strain>DSM 22248 / JCM 15807 / FRC-32</strain>
    </source>
</reference>
<comment type="catalytic activity">
    <reaction evidence="1">
        <text>(6R)-10-formyltetrahydrofolate + 5-amino-1-(5-phospho-beta-D-ribosyl)imidazole-4-carboxamide = 5-formamido-1-(5-phospho-D-ribosyl)imidazole-4-carboxamide + (6S)-5,6,7,8-tetrahydrofolate</text>
        <dbReference type="Rhea" id="RHEA:22192"/>
        <dbReference type="ChEBI" id="CHEBI:57453"/>
        <dbReference type="ChEBI" id="CHEBI:58467"/>
        <dbReference type="ChEBI" id="CHEBI:58475"/>
        <dbReference type="ChEBI" id="CHEBI:195366"/>
        <dbReference type="EC" id="2.1.2.3"/>
    </reaction>
</comment>
<comment type="catalytic activity">
    <reaction evidence="1">
        <text>IMP + H2O = 5-formamido-1-(5-phospho-D-ribosyl)imidazole-4-carboxamide</text>
        <dbReference type="Rhea" id="RHEA:18445"/>
        <dbReference type="ChEBI" id="CHEBI:15377"/>
        <dbReference type="ChEBI" id="CHEBI:58053"/>
        <dbReference type="ChEBI" id="CHEBI:58467"/>
        <dbReference type="EC" id="3.5.4.10"/>
    </reaction>
</comment>
<comment type="pathway">
    <text evidence="1">Purine metabolism; IMP biosynthesis via de novo pathway; 5-formamido-1-(5-phospho-D-ribosyl)imidazole-4-carboxamide from 5-amino-1-(5-phospho-D-ribosyl)imidazole-4-carboxamide (10-formyl THF route): step 1/1.</text>
</comment>
<comment type="pathway">
    <text evidence="1">Purine metabolism; IMP biosynthesis via de novo pathway; IMP from 5-formamido-1-(5-phospho-D-ribosyl)imidazole-4-carboxamide: step 1/1.</text>
</comment>
<comment type="domain">
    <text evidence="1">The IMP cyclohydrolase activity resides in the N-terminal region.</text>
</comment>
<comment type="similarity">
    <text evidence="1">Belongs to the PurH family.</text>
</comment>
<dbReference type="EC" id="2.1.2.3" evidence="1"/>
<dbReference type="EC" id="3.5.4.10" evidence="1"/>
<dbReference type="EMBL" id="CP001390">
    <property type="protein sequence ID" value="ACM19782.1"/>
    <property type="molecule type" value="Genomic_DNA"/>
</dbReference>
<dbReference type="RefSeq" id="WP_012646511.1">
    <property type="nucleotide sequence ID" value="NC_011979.1"/>
</dbReference>
<dbReference type="SMR" id="B9M4Q6"/>
<dbReference type="STRING" id="316067.Geob_1422"/>
<dbReference type="KEGG" id="geo:Geob_1422"/>
<dbReference type="eggNOG" id="COG0138">
    <property type="taxonomic scope" value="Bacteria"/>
</dbReference>
<dbReference type="HOGENOM" id="CLU_016316_5_2_7"/>
<dbReference type="OrthoDB" id="9802065at2"/>
<dbReference type="UniPathway" id="UPA00074">
    <property type="reaction ID" value="UER00133"/>
</dbReference>
<dbReference type="UniPathway" id="UPA00074">
    <property type="reaction ID" value="UER00135"/>
</dbReference>
<dbReference type="Proteomes" id="UP000007721">
    <property type="component" value="Chromosome"/>
</dbReference>
<dbReference type="GO" id="GO:0005829">
    <property type="term" value="C:cytosol"/>
    <property type="evidence" value="ECO:0007669"/>
    <property type="project" value="TreeGrafter"/>
</dbReference>
<dbReference type="GO" id="GO:0003937">
    <property type="term" value="F:IMP cyclohydrolase activity"/>
    <property type="evidence" value="ECO:0007669"/>
    <property type="project" value="UniProtKB-UniRule"/>
</dbReference>
<dbReference type="GO" id="GO:0004643">
    <property type="term" value="F:phosphoribosylaminoimidazolecarboxamide formyltransferase activity"/>
    <property type="evidence" value="ECO:0007669"/>
    <property type="project" value="UniProtKB-UniRule"/>
</dbReference>
<dbReference type="GO" id="GO:0006189">
    <property type="term" value="P:'de novo' IMP biosynthetic process"/>
    <property type="evidence" value="ECO:0007669"/>
    <property type="project" value="UniProtKB-UniRule"/>
</dbReference>
<dbReference type="CDD" id="cd01421">
    <property type="entry name" value="IMPCH"/>
    <property type="match status" value="1"/>
</dbReference>
<dbReference type="FunFam" id="3.40.140.20:FF:000001">
    <property type="entry name" value="Bifunctional purine biosynthesis protein PurH"/>
    <property type="match status" value="1"/>
</dbReference>
<dbReference type="FunFam" id="3.40.140.20:FF:000002">
    <property type="entry name" value="Bifunctional purine biosynthesis protein PurH"/>
    <property type="match status" value="1"/>
</dbReference>
<dbReference type="FunFam" id="3.40.50.1380:FF:000001">
    <property type="entry name" value="Bifunctional purine biosynthesis protein PurH"/>
    <property type="match status" value="1"/>
</dbReference>
<dbReference type="Gene3D" id="3.40.140.20">
    <property type="match status" value="2"/>
</dbReference>
<dbReference type="Gene3D" id="3.40.50.1380">
    <property type="entry name" value="Methylglyoxal synthase-like domain"/>
    <property type="match status" value="1"/>
</dbReference>
<dbReference type="HAMAP" id="MF_00139">
    <property type="entry name" value="PurH"/>
    <property type="match status" value="1"/>
</dbReference>
<dbReference type="InterPro" id="IPR024051">
    <property type="entry name" value="AICAR_Tfase_dup_dom_sf"/>
</dbReference>
<dbReference type="InterPro" id="IPR016193">
    <property type="entry name" value="Cytidine_deaminase-like"/>
</dbReference>
<dbReference type="InterPro" id="IPR011607">
    <property type="entry name" value="MGS-like_dom"/>
</dbReference>
<dbReference type="InterPro" id="IPR036914">
    <property type="entry name" value="MGS-like_dom_sf"/>
</dbReference>
<dbReference type="InterPro" id="IPR002695">
    <property type="entry name" value="PurH-like"/>
</dbReference>
<dbReference type="NCBIfam" id="NF002049">
    <property type="entry name" value="PRK00881.1"/>
    <property type="match status" value="1"/>
</dbReference>
<dbReference type="NCBIfam" id="TIGR00355">
    <property type="entry name" value="purH"/>
    <property type="match status" value="1"/>
</dbReference>
<dbReference type="PANTHER" id="PTHR11692:SF0">
    <property type="entry name" value="BIFUNCTIONAL PURINE BIOSYNTHESIS PROTEIN ATIC"/>
    <property type="match status" value="1"/>
</dbReference>
<dbReference type="PANTHER" id="PTHR11692">
    <property type="entry name" value="BIFUNCTIONAL PURINE BIOSYNTHESIS PROTEIN PURH"/>
    <property type="match status" value="1"/>
</dbReference>
<dbReference type="Pfam" id="PF01808">
    <property type="entry name" value="AICARFT_IMPCHas"/>
    <property type="match status" value="1"/>
</dbReference>
<dbReference type="Pfam" id="PF02142">
    <property type="entry name" value="MGS"/>
    <property type="match status" value="1"/>
</dbReference>
<dbReference type="PIRSF" id="PIRSF000414">
    <property type="entry name" value="AICARFT_IMPCHas"/>
    <property type="match status" value="1"/>
</dbReference>
<dbReference type="SMART" id="SM00798">
    <property type="entry name" value="AICARFT_IMPCHas"/>
    <property type="match status" value="1"/>
</dbReference>
<dbReference type="SMART" id="SM00851">
    <property type="entry name" value="MGS"/>
    <property type="match status" value="1"/>
</dbReference>
<dbReference type="SUPFAM" id="SSF53927">
    <property type="entry name" value="Cytidine deaminase-like"/>
    <property type="match status" value="1"/>
</dbReference>
<dbReference type="SUPFAM" id="SSF52335">
    <property type="entry name" value="Methylglyoxal synthase-like"/>
    <property type="match status" value="1"/>
</dbReference>
<dbReference type="PROSITE" id="PS51855">
    <property type="entry name" value="MGS"/>
    <property type="match status" value="1"/>
</dbReference>